<keyword id="KW-0028">Amino-acid biosynthesis</keyword>
<keyword id="KW-0057">Aromatic amino acid biosynthesis</keyword>
<keyword id="KW-0274">FAD</keyword>
<keyword id="KW-0285">Flavoprotein</keyword>
<keyword id="KW-0288">FMN</keyword>
<keyword id="KW-0456">Lyase</keyword>
<keyword id="KW-0521">NADP</keyword>
<keyword id="KW-1185">Reference proteome</keyword>
<organism>
    <name type="scientific">Rhizobium leguminosarum bv. trifolii (strain WSM2304)</name>
    <dbReference type="NCBI Taxonomy" id="395492"/>
    <lineage>
        <taxon>Bacteria</taxon>
        <taxon>Pseudomonadati</taxon>
        <taxon>Pseudomonadota</taxon>
        <taxon>Alphaproteobacteria</taxon>
        <taxon>Hyphomicrobiales</taxon>
        <taxon>Rhizobiaceae</taxon>
        <taxon>Rhizobium/Agrobacterium group</taxon>
        <taxon>Rhizobium</taxon>
    </lineage>
</organism>
<evidence type="ECO:0000255" key="1">
    <source>
        <dbReference type="HAMAP-Rule" id="MF_00300"/>
    </source>
</evidence>
<dbReference type="EC" id="4.2.3.5" evidence="1"/>
<dbReference type="EMBL" id="CP001191">
    <property type="protein sequence ID" value="ACI53883.1"/>
    <property type="molecule type" value="Genomic_DNA"/>
</dbReference>
<dbReference type="RefSeq" id="WP_012556799.1">
    <property type="nucleotide sequence ID" value="NC_011369.1"/>
</dbReference>
<dbReference type="SMR" id="B5ZST4"/>
<dbReference type="STRING" id="395492.Rleg2_0586"/>
<dbReference type="KEGG" id="rlt:Rleg2_0586"/>
<dbReference type="eggNOG" id="COG0082">
    <property type="taxonomic scope" value="Bacteria"/>
</dbReference>
<dbReference type="HOGENOM" id="CLU_034547_0_0_5"/>
<dbReference type="UniPathway" id="UPA00053">
    <property type="reaction ID" value="UER00090"/>
</dbReference>
<dbReference type="Proteomes" id="UP000008330">
    <property type="component" value="Chromosome"/>
</dbReference>
<dbReference type="GO" id="GO:0005829">
    <property type="term" value="C:cytosol"/>
    <property type="evidence" value="ECO:0007669"/>
    <property type="project" value="TreeGrafter"/>
</dbReference>
<dbReference type="GO" id="GO:0004107">
    <property type="term" value="F:chorismate synthase activity"/>
    <property type="evidence" value="ECO:0007669"/>
    <property type="project" value="UniProtKB-UniRule"/>
</dbReference>
<dbReference type="GO" id="GO:0010181">
    <property type="term" value="F:FMN binding"/>
    <property type="evidence" value="ECO:0007669"/>
    <property type="project" value="TreeGrafter"/>
</dbReference>
<dbReference type="GO" id="GO:0008652">
    <property type="term" value="P:amino acid biosynthetic process"/>
    <property type="evidence" value="ECO:0007669"/>
    <property type="project" value="UniProtKB-KW"/>
</dbReference>
<dbReference type="GO" id="GO:0009073">
    <property type="term" value="P:aromatic amino acid family biosynthetic process"/>
    <property type="evidence" value="ECO:0007669"/>
    <property type="project" value="UniProtKB-KW"/>
</dbReference>
<dbReference type="GO" id="GO:0009423">
    <property type="term" value="P:chorismate biosynthetic process"/>
    <property type="evidence" value="ECO:0007669"/>
    <property type="project" value="UniProtKB-UniRule"/>
</dbReference>
<dbReference type="CDD" id="cd07304">
    <property type="entry name" value="Chorismate_synthase"/>
    <property type="match status" value="1"/>
</dbReference>
<dbReference type="Gene3D" id="3.60.150.10">
    <property type="entry name" value="Chorismate synthase AroC"/>
    <property type="match status" value="1"/>
</dbReference>
<dbReference type="HAMAP" id="MF_00300">
    <property type="entry name" value="Chorismate_synth"/>
    <property type="match status" value="1"/>
</dbReference>
<dbReference type="InterPro" id="IPR000453">
    <property type="entry name" value="Chorismate_synth"/>
</dbReference>
<dbReference type="InterPro" id="IPR035904">
    <property type="entry name" value="Chorismate_synth_AroC_sf"/>
</dbReference>
<dbReference type="InterPro" id="IPR020541">
    <property type="entry name" value="Chorismate_synthase_CS"/>
</dbReference>
<dbReference type="NCBIfam" id="TIGR00033">
    <property type="entry name" value="aroC"/>
    <property type="match status" value="1"/>
</dbReference>
<dbReference type="NCBIfam" id="NF003793">
    <property type="entry name" value="PRK05382.1"/>
    <property type="match status" value="1"/>
</dbReference>
<dbReference type="PANTHER" id="PTHR21085">
    <property type="entry name" value="CHORISMATE SYNTHASE"/>
    <property type="match status" value="1"/>
</dbReference>
<dbReference type="PANTHER" id="PTHR21085:SF0">
    <property type="entry name" value="CHORISMATE SYNTHASE"/>
    <property type="match status" value="1"/>
</dbReference>
<dbReference type="Pfam" id="PF01264">
    <property type="entry name" value="Chorismate_synt"/>
    <property type="match status" value="1"/>
</dbReference>
<dbReference type="PIRSF" id="PIRSF001456">
    <property type="entry name" value="Chorismate_synth"/>
    <property type="match status" value="1"/>
</dbReference>
<dbReference type="SUPFAM" id="SSF103263">
    <property type="entry name" value="Chorismate synthase, AroC"/>
    <property type="match status" value="1"/>
</dbReference>
<dbReference type="PROSITE" id="PS00787">
    <property type="entry name" value="CHORISMATE_SYNTHASE_1"/>
    <property type="match status" value="1"/>
</dbReference>
<dbReference type="PROSITE" id="PS00789">
    <property type="entry name" value="CHORISMATE_SYNTHASE_3"/>
    <property type="match status" value="1"/>
</dbReference>
<feature type="chain" id="PRO_1000115388" description="Chorismate synthase">
    <location>
        <begin position="1"/>
        <end position="365"/>
    </location>
</feature>
<feature type="binding site" evidence="1">
    <location>
        <position position="48"/>
    </location>
    <ligand>
        <name>NADP(+)</name>
        <dbReference type="ChEBI" id="CHEBI:58349"/>
    </ligand>
</feature>
<feature type="binding site" evidence="1">
    <location>
        <position position="54"/>
    </location>
    <ligand>
        <name>NADP(+)</name>
        <dbReference type="ChEBI" id="CHEBI:58349"/>
    </ligand>
</feature>
<feature type="binding site" evidence="1">
    <location>
        <begin position="131"/>
        <end position="133"/>
    </location>
    <ligand>
        <name>FMN</name>
        <dbReference type="ChEBI" id="CHEBI:58210"/>
    </ligand>
</feature>
<feature type="binding site" evidence="1">
    <location>
        <begin position="243"/>
        <end position="244"/>
    </location>
    <ligand>
        <name>FMN</name>
        <dbReference type="ChEBI" id="CHEBI:58210"/>
    </ligand>
</feature>
<feature type="binding site" evidence="1">
    <location>
        <position position="288"/>
    </location>
    <ligand>
        <name>FMN</name>
        <dbReference type="ChEBI" id="CHEBI:58210"/>
    </ligand>
</feature>
<feature type="binding site" evidence="1">
    <location>
        <begin position="303"/>
        <end position="307"/>
    </location>
    <ligand>
        <name>FMN</name>
        <dbReference type="ChEBI" id="CHEBI:58210"/>
    </ligand>
</feature>
<feature type="binding site" evidence="1">
    <location>
        <position position="329"/>
    </location>
    <ligand>
        <name>FMN</name>
        <dbReference type="ChEBI" id="CHEBI:58210"/>
    </ligand>
</feature>
<name>AROC_RHILW</name>
<reference key="1">
    <citation type="journal article" date="2010" name="Stand. Genomic Sci.">
        <title>Complete genome sequence of Rhizobium leguminosarum bv trifolii strain WSM2304, an effective microsymbiont of the South American clover Trifolium polymorphum.</title>
        <authorList>
            <person name="Reeve W."/>
            <person name="O'Hara G."/>
            <person name="Chain P."/>
            <person name="Ardley J."/>
            <person name="Brau L."/>
            <person name="Nandesena K."/>
            <person name="Tiwari R."/>
            <person name="Malfatti S."/>
            <person name="Kiss H."/>
            <person name="Lapidus A."/>
            <person name="Copeland A."/>
            <person name="Nolan M."/>
            <person name="Land M."/>
            <person name="Ivanova N."/>
            <person name="Mavromatis K."/>
            <person name="Markowitz V."/>
            <person name="Kyrpides N."/>
            <person name="Melino V."/>
            <person name="Denton M."/>
            <person name="Yates R."/>
            <person name="Howieson J."/>
        </authorList>
    </citation>
    <scope>NUCLEOTIDE SEQUENCE [LARGE SCALE GENOMIC DNA]</scope>
    <source>
        <strain>WSM2304</strain>
    </source>
</reference>
<accession>B5ZST4</accession>
<proteinExistence type="inferred from homology"/>
<protein>
    <recommendedName>
        <fullName evidence="1">Chorismate synthase</fullName>
        <shortName evidence="1">CS</shortName>
        <ecNumber evidence="1">4.2.3.5</ecNumber>
    </recommendedName>
    <alternativeName>
        <fullName evidence="1">5-enolpyruvylshikimate-3-phosphate phospholyase</fullName>
    </alternativeName>
</protein>
<comment type="function">
    <text evidence="1">Catalyzes the anti-1,4-elimination of the C-3 phosphate and the C-6 proR hydrogen from 5-enolpyruvylshikimate-3-phosphate (EPSP) to yield chorismate, which is the branch point compound that serves as the starting substrate for the three terminal pathways of aromatic amino acid biosynthesis. This reaction introduces a second double bond into the aromatic ring system.</text>
</comment>
<comment type="catalytic activity">
    <reaction evidence="1">
        <text>5-O-(1-carboxyvinyl)-3-phosphoshikimate = chorismate + phosphate</text>
        <dbReference type="Rhea" id="RHEA:21020"/>
        <dbReference type="ChEBI" id="CHEBI:29748"/>
        <dbReference type="ChEBI" id="CHEBI:43474"/>
        <dbReference type="ChEBI" id="CHEBI:57701"/>
        <dbReference type="EC" id="4.2.3.5"/>
    </reaction>
</comment>
<comment type="cofactor">
    <cofactor evidence="1">
        <name>FMNH2</name>
        <dbReference type="ChEBI" id="CHEBI:57618"/>
    </cofactor>
    <text evidence="1">Reduced FMN (FMNH(2)).</text>
</comment>
<comment type="pathway">
    <text evidence="1">Metabolic intermediate biosynthesis; chorismate biosynthesis; chorismate from D-erythrose 4-phosphate and phosphoenolpyruvate: step 7/7.</text>
</comment>
<comment type="subunit">
    <text evidence="1">Homotetramer.</text>
</comment>
<comment type="similarity">
    <text evidence="1">Belongs to the chorismate synthase family.</text>
</comment>
<gene>
    <name evidence="1" type="primary">aroC</name>
    <name type="ordered locus">Rleg2_0586</name>
</gene>
<sequence>MSHNTFGHLFRVTTWGESHGPALGCVVDGCPPGLRFKLEDLQVWLDKRKPGQSRFVTQRREDDLVKVLSGVMLDADGETMTTTGTPISMLIENTDQRSKDYGEIARQFRPGHADYTYDLKYGIRDYRGGGRSSARETAARVAAGGIARLVVPGVTVRGALVQIGKHKIDRRAWDWDQVGQNPFFSPDAAIVPVWEEYLDGIRKNGSSIGAVVEVIAEGVPAGLGAPIYSKLDQDIASLLMSINAVKGVEIGNGFAAAETSGEDNADEMRMGNDGVPIFLSNNAGGILGGISTGQPVVARFAVKPTSSILTERQSIDADGKNVDVRTKGRHDPCVGIRAVPIGEAMVACAIADHYLRDRGQTGRLK</sequence>